<accession>P41395</accession>
<feature type="chain" id="PRO_0000207259" description="Uncharacterized protein LB_356">
    <location>
        <begin position="1"/>
        <end position="530"/>
    </location>
</feature>
<feature type="sequence conflict" description="In Ref. 2." evidence="1" ref="2">
    <original>GIGYLI</original>
    <variation>RVRLLV</variation>
    <location>
        <begin position="402"/>
        <end position="407"/>
    </location>
</feature>
<proteinExistence type="predicted"/>
<gene>
    <name type="ordered locus">LB_356</name>
</gene>
<protein>
    <recommendedName>
        <fullName>Uncharacterized protein LB_356</fullName>
    </recommendedName>
</protein>
<name>Y5356_LEPIN</name>
<evidence type="ECO:0000305" key="1"/>
<organism>
    <name type="scientific">Leptospira interrogans serogroup Icterohaemorrhagiae serovar Lai (strain 56601)</name>
    <dbReference type="NCBI Taxonomy" id="189518"/>
    <lineage>
        <taxon>Bacteria</taxon>
        <taxon>Pseudomonadati</taxon>
        <taxon>Spirochaetota</taxon>
        <taxon>Spirochaetia</taxon>
        <taxon>Leptospirales</taxon>
        <taxon>Leptospiraceae</taxon>
        <taxon>Leptospira</taxon>
    </lineage>
</organism>
<keyword id="KW-1185">Reference proteome</keyword>
<reference key="1">
    <citation type="journal article" date="2003" name="Nature">
        <title>Unique physiological and pathogenic features of Leptospira interrogans revealed by whole-genome sequencing.</title>
        <authorList>
            <person name="Ren S.-X."/>
            <person name="Fu G."/>
            <person name="Jiang X.-G."/>
            <person name="Zeng R."/>
            <person name="Miao Y.-G."/>
            <person name="Xu H."/>
            <person name="Zhang Y.-X."/>
            <person name="Xiong H."/>
            <person name="Lu G."/>
            <person name="Lu L.-F."/>
            <person name="Jiang H.-Q."/>
            <person name="Jia J."/>
            <person name="Tu Y.-F."/>
            <person name="Jiang J.-X."/>
            <person name="Gu W.-Y."/>
            <person name="Zhang Y.-Q."/>
            <person name="Cai Z."/>
            <person name="Sheng H.-H."/>
            <person name="Yin H.-F."/>
            <person name="Zhang Y."/>
            <person name="Zhu G.-F."/>
            <person name="Wan M."/>
            <person name="Huang H.-L."/>
            <person name="Qian Z."/>
            <person name="Wang S.-Y."/>
            <person name="Ma W."/>
            <person name="Yao Z.-J."/>
            <person name="Shen Y."/>
            <person name="Qiang B.-Q."/>
            <person name="Xia Q.-C."/>
            <person name="Guo X.-K."/>
            <person name="Danchin A."/>
            <person name="Saint Girons I."/>
            <person name="Somerville R.L."/>
            <person name="Wen Y.-M."/>
            <person name="Shi M.-H."/>
            <person name="Chen Z."/>
            <person name="Xu J.-G."/>
            <person name="Zhao G.-P."/>
        </authorList>
    </citation>
    <scope>NUCLEOTIDE SEQUENCE [LARGE SCALE GENOMIC DNA]</scope>
    <source>
        <strain>56601</strain>
    </source>
</reference>
<reference key="2">
    <citation type="journal article" date="1992" name="J. Gen. Microbiol.">
        <title>Cloning of dapD, aroD and asd of Leptospira interrogans serovar icterohaemorrhagiae, and nucleotide sequence of the asd gene.</title>
        <authorList>
            <person name="Baril C."/>
            <person name="Richaud C."/>
            <person name="Fourni E."/>
            <person name="Baranton G."/>
            <person name="Saint-Girons I."/>
        </authorList>
    </citation>
    <scope>NUCLEOTIDE SEQUENCE [GENOMIC DNA] OF 402-530</scope>
    <source>
        <strain>Serogroup Icterohaemorrhagiae</strain>
    </source>
</reference>
<dbReference type="EMBL" id="AE010301">
    <property type="protein sequence ID" value="AAN51915.1"/>
    <property type="molecule type" value="Genomic_DNA"/>
</dbReference>
<dbReference type="EMBL" id="S92223">
    <property type="protein sequence ID" value="AAB21986.1"/>
    <property type="molecule type" value="Genomic_DNA"/>
</dbReference>
<dbReference type="EMBL" id="M77500">
    <property type="protein sequence ID" value="AAA25261.1"/>
    <property type="molecule type" value="Genomic_DNA"/>
</dbReference>
<dbReference type="PIR" id="B44846">
    <property type="entry name" value="B44846"/>
</dbReference>
<dbReference type="RefSeq" id="NP_714900.1">
    <property type="nucleotide sequence ID" value="NC_004343.2"/>
</dbReference>
<dbReference type="RefSeq" id="WP_000057258.1">
    <property type="nucleotide sequence ID" value="NC_004343.2"/>
</dbReference>
<dbReference type="SMR" id="P41395"/>
<dbReference type="STRING" id="189518.LB_356"/>
<dbReference type="PaxDb" id="189518-LB_356"/>
<dbReference type="EnsemblBacteria" id="AAN51915">
    <property type="protein sequence ID" value="AAN51915"/>
    <property type="gene ID" value="LB_356"/>
</dbReference>
<dbReference type="KEGG" id="lil:LB_356"/>
<dbReference type="PATRIC" id="fig|189518.3.peg.4671"/>
<dbReference type="HOGENOM" id="CLU_513680_0_0_12"/>
<dbReference type="InParanoid" id="P41395"/>
<dbReference type="OrthoDB" id="335095at2"/>
<dbReference type="Proteomes" id="UP000001408">
    <property type="component" value="Chromosome II"/>
</dbReference>
<sequence>MAQIKNTIFKTTSKRTNHGFILIVGILILFLLDFSFFRVLIWKVPNESPWSSNHFYNFLYEYFSLQEKQKKNYRILIVGSSIAHYSFDREAFGKEILERIGKNVEVEFLSYAGMTPLDAWLCRQKIVELKPDFVIFPINFIDWRLHRAYSLNPEYKNETIDSKILLLDALDFFEAPQSRFIFPLETTIEFFAELGFAKTSEYISAFLFGFYRYKDIFWKNLRSLYDHRYGRNISYHGYNGVQIPERVTSLGWTGKNFSFILTEKMKTEGFLVQIVPEILASGPLKITFKKKNKVQSFSFIEPGWKKILLDNSFMVEDPSLLITAELSSSWIPFFAVGENKDWNYDRLGVRLQQTFGTEIPKNGMQYTREERLEDIRYLYMSDLEYSKYFNFRLLEDFDQRPGIGYLIALKDAKLRIREEKFVPVLHFQYLRKFSSFLKEKKVPLWIINNPENPISLDWYVKSNWYKDHLLFLKELSGDLVFFSDLKDSLSMQDFSDYHHFTFPGMMKMSPIYANEFVKISERQSKNLLKP</sequence>